<reference key="1">
    <citation type="journal article" date="2002" name="DNA Res.">
        <title>Complete genome structure of the thermophilic cyanobacterium Thermosynechococcus elongatus BP-1.</title>
        <authorList>
            <person name="Nakamura Y."/>
            <person name="Kaneko T."/>
            <person name="Sato S."/>
            <person name="Ikeuchi M."/>
            <person name="Katoh H."/>
            <person name="Sasamoto S."/>
            <person name="Watanabe A."/>
            <person name="Iriguchi M."/>
            <person name="Kawashima K."/>
            <person name="Kimura T."/>
            <person name="Kishida Y."/>
            <person name="Kiyokawa C."/>
            <person name="Kohara M."/>
            <person name="Matsumoto M."/>
            <person name="Matsuno A."/>
            <person name="Nakazaki N."/>
            <person name="Shimpo S."/>
            <person name="Sugimoto M."/>
            <person name="Takeuchi C."/>
            <person name="Yamada M."/>
            <person name="Tabata S."/>
        </authorList>
    </citation>
    <scope>NUCLEOTIDE SEQUENCE [LARGE SCALE GENOMIC DNA]</scope>
    <source>
        <strain>NIES-2133 / IAM M-273 / BP-1</strain>
    </source>
</reference>
<keyword id="KW-0032">Aminotransferase</keyword>
<keyword id="KW-1185">Reference proteome</keyword>
<keyword id="KW-0808">Transferase</keyword>
<comment type="function">
    <text evidence="1">The glycine cleavage system catalyzes the degradation of glycine.</text>
</comment>
<comment type="catalytic activity">
    <reaction evidence="1">
        <text>N(6)-[(R)-S(8)-aminomethyldihydrolipoyl]-L-lysyl-[protein] + (6S)-5,6,7,8-tetrahydrofolate = N(6)-[(R)-dihydrolipoyl]-L-lysyl-[protein] + (6R)-5,10-methylene-5,6,7,8-tetrahydrofolate + NH4(+)</text>
        <dbReference type="Rhea" id="RHEA:16945"/>
        <dbReference type="Rhea" id="RHEA-COMP:10475"/>
        <dbReference type="Rhea" id="RHEA-COMP:10492"/>
        <dbReference type="ChEBI" id="CHEBI:15636"/>
        <dbReference type="ChEBI" id="CHEBI:28938"/>
        <dbReference type="ChEBI" id="CHEBI:57453"/>
        <dbReference type="ChEBI" id="CHEBI:83100"/>
        <dbReference type="ChEBI" id="CHEBI:83143"/>
        <dbReference type="EC" id="2.1.2.10"/>
    </reaction>
</comment>
<comment type="subunit">
    <text evidence="1">The glycine cleavage system is composed of four proteins: P, T, L and H.</text>
</comment>
<comment type="similarity">
    <text evidence="1">Belongs to the GcvT family.</text>
</comment>
<name>GCST_THEVB</name>
<protein>
    <recommendedName>
        <fullName evidence="1">Aminomethyltransferase</fullName>
        <ecNumber evidence="1">2.1.2.10</ecNumber>
    </recommendedName>
    <alternativeName>
        <fullName evidence="1">Glycine cleavage system T protein</fullName>
    </alternativeName>
</protein>
<sequence>MISMAEALQRTPLYPLHQGARFTPFGDWEMPLQYSSILQEHQAVRQQVGMFDISHMGKLVLRGEGVLGALQTLVPTNLSQLQPGQAKYTVLLNEAGGIVDDVILYMGDGQVRCIVNAATTAKDWAWFQKYLPASIEVIDESASQVLIALQGPAATATLSPLCDRPLGEIKTYRHAPVNLLGQPAWIARTGYTGEDGWEILVPAELGQQLWQTLLAAGVTPCGLGARDTLRLEAAMLLYGQDMDEQTTPLEAGLDGLIDWQKPDFVGRAALLAQKQQGIERQLVGLELLGKGIARHGYPIYAGAQAVGEVTSGTLSPTLGKAIALGYVFPEFAHIGRELAVQVRDRWVPAVVVPRPFYRRPRSTAKI</sequence>
<gene>
    <name evidence="1" type="primary">gcvT</name>
    <name type="ordered locus">tll0745</name>
</gene>
<proteinExistence type="inferred from homology"/>
<dbReference type="EC" id="2.1.2.10" evidence="1"/>
<dbReference type="EMBL" id="BA000039">
    <property type="protein sequence ID" value="BAC08296.1"/>
    <property type="molecule type" value="Genomic_DNA"/>
</dbReference>
<dbReference type="RefSeq" id="NP_681534.1">
    <property type="nucleotide sequence ID" value="NC_004113.1"/>
</dbReference>
<dbReference type="RefSeq" id="WP_011056592.1">
    <property type="nucleotide sequence ID" value="NC_004113.1"/>
</dbReference>
<dbReference type="SMR" id="Q8DKV6"/>
<dbReference type="STRING" id="197221.gene:10747335"/>
<dbReference type="EnsemblBacteria" id="BAC08296">
    <property type="protein sequence ID" value="BAC08296"/>
    <property type="gene ID" value="BAC08296"/>
</dbReference>
<dbReference type="KEGG" id="tel:tll0745"/>
<dbReference type="PATRIC" id="fig|197221.4.peg.785"/>
<dbReference type="eggNOG" id="COG0404">
    <property type="taxonomic scope" value="Bacteria"/>
</dbReference>
<dbReference type="Proteomes" id="UP000000440">
    <property type="component" value="Chromosome"/>
</dbReference>
<dbReference type="GO" id="GO:0005829">
    <property type="term" value="C:cytosol"/>
    <property type="evidence" value="ECO:0007669"/>
    <property type="project" value="TreeGrafter"/>
</dbReference>
<dbReference type="GO" id="GO:0005960">
    <property type="term" value="C:glycine cleavage complex"/>
    <property type="evidence" value="ECO:0007669"/>
    <property type="project" value="InterPro"/>
</dbReference>
<dbReference type="GO" id="GO:0004047">
    <property type="term" value="F:aminomethyltransferase activity"/>
    <property type="evidence" value="ECO:0007669"/>
    <property type="project" value="UniProtKB-UniRule"/>
</dbReference>
<dbReference type="GO" id="GO:0008483">
    <property type="term" value="F:transaminase activity"/>
    <property type="evidence" value="ECO:0007669"/>
    <property type="project" value="UniProtKB-KW"/>
</dbReference>
<dbReference type="GO" id="GO:0019464">
    <property type="term" value="P:glycine decarboxylation via glycine cleavage system"/>
    <property type="evidence" value="ECO:0007669"/>
    <property type="project" value="UniProtKB-UniRule"/>
</dbReference>
<dbReference type="FunFam" id="2.40.30.110:FF:000003">
    <property type="entry name" value="Aminomethyltransferase"/>
    <property type="match status" value="1"/>
</dbReference>
<dbReference type="FunFam" id="3.30.70.1400:FF:000001">
    <property type="entry name" value="Aminomethyltransferase"/>
    <property type="match status" value="1"/>
</dbReference>
<dbReference type="FunFam" id="4.10.1250.10:FF:000001">
    <property type="entry name" value="Aminomethyltransferase"/>
    <property type="match status" value="1"/>
</dbReference>
<dbReference type="Gene3D" id="2.40.30.110">
    <property type="entry name" value="Aminomethyltransferase beta-barrel domains"/>
    <property type="match status" value="1"/>
</dbReference>
<dbReference type="Gene3D" id="3.30.70.1400">
    <property type="entry name" value="Aminomethyltransferase beta-barrel domains"/>
    <property type="match status" value="1"/>
</dbReference>
<dbReference type="Gene3D" id="4.10.1250.10">
    <property type="entry name" value="Aminomethyltransferase fragment"/>
    <property type="match status" value="1"/>
</dbReference>
<dbReference type="Gene3D" id="3.30.1360.120">
    <property type="entry name" value="Probable tRNA modification gtpase trme, domain 1"/>
    <property type="match status" value="1"/>
</dbReference>
<dbReference type="HAMAP" id="MF_00259">
    <property type="entry name" value="GcvT"/>
    <property type="match status" value="1"/>
</dbReference>
<dbReference type="InterPro" id="IPR006223">
    <property type="entry name" value="GCS_T"/>
</dbReference>
<dbReference type="InterPro" id="IPR022903">
    <property type="entry name" value="GCS_T_bac"/>
</dbReference>
<dbReference type="InterPro" id="IPR013977">
    <property type="entry name" value="GCST_C"/>
</dbReference>
<dbReference type="InterPro" id="IPR006222">
    <property type="entry name" value="GCV_T_N"/>
</dbReference>
<dbReference type="InterPro" id="IPR028896">
    <property type="entry name" value="GcvT/YgfZ/DmdA"/>
</dbReference>
<dbReference type="InterPro" id="IPR029043">
    <property type="entry name" value="GcvT/YgfZ_C"/>
</dbReference>
<dbReference type="InterPro" id="IPR027266">
    <property type="entry name" value="TrmE/GcvT_dom1"/>
</dbReference>
<dbReference type="NCBIfam" id="TIGR00528">
    <property type="entry name" value="gcvT"/>
    <property type="match status" value="1"/>
</dbReference>
<dbReference type="NCBIfam" id="NF001567">
    <property type="entry name" value="PRK00389.1"/>
    <property type="match status" value="1"/>
</dbReference>
<dbReference type="PANTHER" id="PTHR43757">
    <property type="entry name" value="AMINOMETHYLTRANSFERASE"/>
    <property type="match status" value="1"/>
</dbReference>
<dbReference type="PANTHER" id="PTHR43757:SF2">
    <property type="entry name" value="AMINOMETHYLTRANSFERASE, MITOCHONDRIAL"/>
    <property type="match status" value="1"/>
</dbReference>
<dbReference type="Pfam" id="PF01571">
    <property type="entry name" value="GCV_T"/>
    <property type="match status" value="1"/>
</dbReference>
<dbReference type="Pfam" id="PF08669">
    <property type="entry name" value="GCV_T_C"/>
    <property type="match status" value="1"/>
</dbReference>
<dbReference type="PIRSF" id="PIRSF006487">
    <property type="entry name" value="GcvT"/>
    <property type="match status" value="1"/>
</dbReference>
<dbReference type="SUPFAM" id="SSF101790">
    <property type="entry name" value="Aminomethyltransferase beta-barrel domain"/>
    <property type="match status" value="1"/>
</dbReference>
<dbReference type="SUPFAM" id="SSF103025">
    <property type="entry name" value="Folate-binding domain"/>
    <property type="match status" value="1"/>
</dbReference>
<accession>Q8DKV6</accession>
<feature type="chain" id="PRO_0000122606" description="Aminomethyltransferase">
    <location>
        <begin position="1"/>
        <end position="366"/>
    </location>
</feature>
<evidence type="ECO:0000255" key="1">
    <source>
        <dbReference type="HAMAP-Rule" id="MF_00259"/>
    </source>
</evidence>
<organism>
    <name type="scientific">Thermosynechococcus vestitus (strain NIES-2133 / IAM M-273 / BP-1)</name>
    <dbReference type="NCBI Taxonomy" id="197221"/>
    <lineage>
        <taxon>Bacteria</taxon>
        <taxon>Bacillati</taxon>
        <taxon>Cyanobacteriota</taxon>
        <taxon>Cyanophyceae</taxon>
        <taxon>Acaryochloridales</taxon>
        <taxon>Thermosynechococcaceae</taxon>
        <taxon>Thermosynechococcus</taxon>
    </lineage>
</organism>